<name>PSTB3_STRPN</name>
<evidence type="ECO:0000255" key="1">
    <source>
        <dbReference type="HAMAP-Rule" id="MF_01702"/>
    </source>
</evidence>
<keyword id="KW-0067">ATP-binding</keyword>
<keyword id="KW-1003">Cell membrane</keyword>
<keyword id="KW-0472">Membrane</keyword>
<keyword id="KW-0547">Nucleotide-binding</keyword>
<keyword id="KW-0592">Phosphate transport</keyword>
<keyword id="KW-1185">Reference proteome</keyword>
<keyword id="KW-1278">Translocase</keyword>
<keyword id="KW-0813">Transport</keyword>
<organism>
    <name type="scientific">Streptococcus pneumoniae serotype 4 (strain ATCC BAA-334 / TIGR4)</name>
    <dbReference type="NCBI Taxonomy" id="170187"/>
    <lineage>
        <taxon>Bacteria</taxon>
        <taxon>Bacillati</taxon>
        <taxon>Bacillota</taxon>
        <taxon>Bacilli</taxon>
        <taxon>Lactobacillales</taxon>
        <taxon>Streptococcaceae</taxon>
        <taxon>Streptococcus</taxon>
    </lineage>
</organism>
<dbReference type="EC" id="7.3.2.1" evidence="1"/>
<dbReference type="EMBL" id="AE005672">
    <property type="protein sequence ID" value="AAK76147.1"/>
    <property type="molecule type" value="Genomic_DNA"/>
</dbReference>
<dbReference type="PIR" id="B95244">
    <property type="entry name" value="B95244"/>
</dbReference>
<dbReference type="SMR" id="P0A2V8"/>
<dbReference type="PaxDb" id="170187-SP_2087"/>
<dbReference type="EnsemblBacteria" id="AAK76147">
    <property type="protein sequence ID" value="AAK76147"/>
    <property type="gene ID" value="SP_2087"/>
</dbReference>
<dbReference type="KEGG" id="spn:SP_2087"/>
<dbReference type="eggNOG" id="COG1117">
    <property type="taxonomic scope" value="Bacteria"/>
</dbReference>
<dbReference type="PhylomeDB" id="P0A2V8"/>
<dbReference type="BioCyc" id="SPNE170187:G1FZB-2172-MONOMER"/>
<dbReference type="Proteomes" id="UP000000585">
    <property type="component" value="Chromosome"/>
</dbReference>
<dbReference type="GO" id="GO:0005886">
    <property type="term" value="C:plasma membrane"/>
    <property type="evidence" value="ECO:0007669"/>
    <property type="project" value="UniProtKB-SubCell"/>
</dbReference>
<dbReference type="GO" id="GO:0005524">
    <property type="term" value="F:ATP binding"/>
    <property type="evidence" value="ECO:0007669"/>
    <property type="project" value="UniProtKB-KW"/>
</dbReference>
<dbReference type="GO" id="GO:0016887">
    <property type="term" value="F:ATP hydrolysis activity"/>
    <property type="evidence" value="ECO:0007669"/>
    <property type="project" value="InterPro"/>
</dbReference>
<dbReference type="GO" id="GO:0015415">
    <property type="term" value="F:ATPase-coupled phosphate ion transmembrane transporter activity"/>
    <property type="evidence" value="ECO:0007669"/>
    <property type="project" value="UniProtKB-EC"/>
</dbReference>
<dbReference type="GO" id="GO:0035435">
    <property type="term" value="P:phosphate ion transmembrane transport"/>
    <property type="evidence" value="ECO:0007669"/>
    <property type="project" value="InterPro"/>
</dbReference>
<dbReference type="CDD" id="cd03260">
    <property type="entry name" value="ABC_PstB_phosphate_transporter"/>
    <property type="match status" value="1"/>
</dbReference>
<dbReference type="FunFam" id="3.40.50.300:FF:000132">
    <property type="entry name" value="Phosphate import ATP-binding protein PstB"/>
    <property type="match status" value="1"/>
</dbReference>
<dbReference type="Gene3D" id="3.40.50.300">
    <property type="entry name" value="P-loop containing nucleotide triphosphate hydrolases"/>
    <property type="match status" value="1"/>
</dbReference>
<dbReference type="InterPro" id="IPR003593">
    <property type="entry name" value="AAA+_ATPase"/>
</dbReference>
<dbReference type="InterPro" id="IPR003439">
    <property type="entry name" value="ABC_transporter-like_ATP-bd"/>
</dbReference>
<dbReference type="InterPro" id="IPR017871">
    <property type="entry name" value="ABC_transporter-like_CS"/>
</dbReference>
<dbReference type="InterPro" id="IPR027417">
    <property type="entry name" value="P-loop_NTPase"/>
</dbReference>
<dbReference type="InterPro" id="IPR005670">
    <property type="entry name" value="PstB-like"/>
</dbReference>
<dbReference type="NCBIfam" id="TIGR00972">
    <property type="entry name" value="3a0107s01c2"/>
    <property type="match status" value="1"/>
</dbReference>
<dbReference type="PANTHER" id="PTHR43423">
    <property type="entry name" value="ABC TRANSPORTER I FAMILY MEMBER 17"/>
    <property type="match status" value="1"/>
</dbReference>
<dbReference type="PANTHER" id="PTHR43423:SF1">
    <property type="entry name" value="ABC TRANSPORTER I FAMILY MEMBER 17"/>
    <property type="match status" value="1"/>
</dbReference>
<dbReference type="Pfam" id="PF00005">
    <property type="entry name" value="ABC_tran"/>
    <property type="match status" value="1"/>
</dbReference>
<dbReference type="SMART" id="SM00382">
    <property type="entry name" value="AAA"/>
    <property type="match status" value="1"/>
</dbReference>
<dbReference type="SUPFAM" id="SSF52540">
    <property type="entry name" value="P-loop containing nucleoside triphosphate hydrolases"/>
    <property type="match status" value="1"/>
</dbReference>
<dbReference type="PROSITE" id="PS00211">
    <property type="entry name" value="ABC_TRANSPORTER_1"/>
    <property type="match status" value="1"/>
</dbReference>
<dbReference type="PROSITE" id="PS50893">
    <property type="entry name" value="ABC_TRANSPORTER_2"/>
    <property type="match status" value="1"/>
</dbReference>
<dbReference type="PROSITE" id="PS51238">
    <property type="entry name" value="PSTB"/>
    <property type="match status" value="1"/>
</dbReference>
<protein>
    <recommendedName>
        <fullName evidence="1">Phosphate import ATP-binding protein PstB 3</fullName>
        <ecNumber evidence="1">7.3.2.1</ecNumber>
    </recommendedName>
    <alternativeName>
        <fullName evidence="1">ABC phosphate transporter 3</fullName>
    </alternativeName>
    <alternativeName>
        <fullName evidence="1">Phosphate-transporting ATPase 3</fullName>
    </alternativeName>
</protein>
<feature type="chain" id="PRO_0000092899" description="Phosphate import ATP-binding protein PstB 3">
    <location>
        <begin position="1"/>
        <end position="250"/>
    </location>
</feature>
<feature type="domain" description="ABC transporter" evidence="1">
    <location>
        <begin position="4"/>
        <end position="245"/>
    </location>
</feature>
<feature type="binding site" evidence="1">
    <location>
        <begin position="36"/>
        <end position="43"/>
    </location>
    <ligand>
        <name>ATP</name>
        <dbReference type="ChEBI" id="CHEBI:30616"/>
    </ligand>
</feature>
<reference key="1">
    <citation type="journal article" date="2001" name="Science">
        <title>Complete genome sequence of a virulent isolate of Streptococcus pneumoniae.</title>
        <authorList>
            <person name="Tettelin H."/>
            <person name="Nelson K.E."/>
            <person name="Paulsen I.T."/>
            <person name="Eisen J.A."/>
            <person name="Read T.D."/>
            <person name="Peterson S.N."/>
            <person name="Heidelberg J.F."/>
            <person name="DeBoy R.T."/>
            <person name="Haft D.H."/>
            <person name="Dodson R.J."/>
            <person name="Durkin A.S."/>
            <person name="Gwinn M.L."/>
            <person name="Kolonay J.F."/>
            <person name="Nelson W.C."/>
            <person name="Peterson J.D."/>
            <person name="Umayam L.A."/>
            <person name="White O."/>
            <person name="Salzberg S.L."/>
            <person name="Lewis M.R."/>
            <person name="Radune D."/>
            <person name="Holtzapple E.K."/>
            <person name="Khouri H.M."/>
            <person name="Wolf A.M."/>
            <person name="Utterback T.R."/>
            <person name="Hansen C.L."/>
            <person name="McDonald L.A."/>
            <person name="Feldblyum T.V."/>
            <person name="Angiuoli S.V."/>
            <person name="Dickinson T."/>
            <person name="Hickey E.K."/>
            <person name="Holt I.E."/>
            <person name="Loftus B.J."/>
            <person name="Yang F."/>
            <person name="Smith H.O."/>
            <person name="Venter J.C."/>
            <person name="Dougherty B.A."/>
            <person name="Morrison D.A."/>
            <person name="Hollingshead S.K."/>
            <person name="Fraser C.M."/>
        </authorList>
    </citation>
    <scope>NUCLEOTIDE SEQUENCE [LARGE SCALE GENOMIC DNA]</scope>
    <source>
        <strain>ATCC BAA-334 / TIGR4</strain>
    </source>
</reference>
<proteinExistence type="inferred from homology"/>
<accession>P0A2V8</accession>
<accession>Q8DN61</accession>
<accession>Q9X4T3</accession>
<gene>
    <name evidence="1" type="primary">pstB3</name>
    <name type="ordered locus">SP_2087</name>
</gene>
<comment type="function">
    <text evidence="1">Part of the ABC transporter complex PstSACB involved in phosphate import. Responsible for energy coupling to the transport system.</text>
</comment>
<comment type="catalytic activity">
    <reaction evidence="1">
        <text>phosphate(out) + ATP + H2O = ADP + 2 phosphate(in) + H(+)</text>
        <dbReference type="Rhea" id="RHEA:24440"/>
        <dbReference type="ChEBI" id="CHEBI:15377"/>
        <dbReference type="ChEBI" id="CHEBI:15378"/>
        <dbReference type="ChEBI" id="CHEBI:30616"/>
        <dbReference type="ChEBI" id="CHEBI:43474"/>
        <dbReference type="ChEBI" id="CHEBI:456216"/>
        <dbReference type="EC" id="7.3.2.1"/>
    </reaction>
</comment>
<comment type="subunit">
    <text evidence="1">The complex is composed of two ATP-binding proteins (PstB), two transmembrane proteins (PstC and PstA) and a solute-binding protein (PstS).</text>
</comment>
<comment type="subcellular location">
    <subcellularLocation>
        <location evidence="1">Cell membrane</location>
        <topology evidence="1">Peripheral membrane protein</topology>
    </subcellularLocation>
</comment>
<comment type="similarity">
    <text evidence="1">Belongs to the ABC transporter superfamily. Phosphate importer (TC 3.A.1.7) family.</text>
</comment>
<sequence length="250" mass="28108">MGTFSVRHLDLFYGDFQALKNISIQLPERQITALIGPSGCGKSTFLKTLNRMNDLVPSCHIEGQVLLDEQDIYSSKFNLNQLRKRVGMVFQQPNPFAMSIYDNVAYGPRTHGIRDKKQLDALVEKSLKGAAIWEEVKDDLKKSAMSLSGGQQQRLCIARALAVEPDILLMDEPTSALDPISTLKIEDLIQQLKKDYTIIIVTHNMQQASRISDKTAFFLTGEICEFGDTVDVFTNPKDQRTEDYISGRFG</sequence>